<protein>
    <recommendedName>
        <fullName evidence="2">Cytosolic carboxypeptidase-like protein 5</fullName>
        <ecNumber evidence="2">3.4.17.-</ecNumber>
        <ecNumber evidence="2">3.4.17.24</ecNumber>
    </recommendedName>
    <alternativeName>
        <fullName>ATP/GTP-binding protein-like 5</fullName>
    </alternativeName>
    <alternativeName>
        <fullName evidence="6">Protein deglutamylase CCP5</fullName>
    </alternativeName>
</protein>
<organism>
    <name type="scientific">Ailuropoda melanoleuca</name>
    <name type="common">Giant panda</name>
    <dbReference type="NCBI Taxonomy" id="9646"/>
    <lineage>
        <taxon>Eukaryota</taxon>
        <taxon>Metazoa</taxon>
        <taxon>Chordata</taxon>
        <taxon>Craniata</taxon>
        <taxon>Vertebrata</taxon>
        <taxon>Euteleostomi</taxon>
        <taxon>Mammalia</taxon>
        <taxon>Eutheria</taxon>
        <taxon>Laurasiatheria</taxon>
        <taxon>Carnivora</taxon>
        <taxon>Caniformia</taxon>
        <taxon>Ursidae</taxon>
        <taxon>Ailuropoda</taxon>
    </lineage>
</organism>
<feature type="chain" id="PRO_0000403761" description="Cytosolic carboxypeptidase-like protein 5">
    <location>
        <begin position="1"/>
        <end position="884"/>
    </location>
</feature>
<feature type="domain" description="Peptidase M14" evidence="4">
    <location>
        <begin position="157"/>
        <end position="570"/>
    </location>
</feature>
<feature type="region of interest" description="Disordered" evidence="5">
    <location>
        <begin position="343"/>
        <end position="364"/>
    </location>
</feature>
<feature type="region of interest" description="Disordered" evidence="5">
    <location>
        <begin position="376"/>
        <end position="401"/>
    </location>
</feature>
<feature type="region of interest" description="Disordered" evidence="5">
    <location>
        <begin position="603"/>
        <end position="737"/>
    </location>
</feature>
<feature type="region of interest" description="Disordered" evidence="5">
    <location>
        <begin position="784"/>
        <end position="859"/>
    </location>
</feature>
<feature type="compositionally biased region" description="Polar residues" evidence="5">
    <location>
        <begin position="620"/>
        <end position="635"/>
    </location>
</feature>
<feature type="compositionally biased region" description="Low complexity" evidence="5">
    <location>
        <begin position="641"/>
        <end position="666"/>
    </location>
</feature>
<feature type="compositionally biased region" description="Low complexity" evidence="5">
    <location>
        <begin position="714"/>
        <end position="737"/>
    </location>
</feature>
<feature type="compositionally biased region" description="Polar residues" evidence="5">
    <location>
        <begin position="846"/>
        <end position="857"/>
    </location>
</feature>
<feature type="active site" description="Proton donor/acceptor" evidence="4">
    <location>
        <position position="516"/>
    </location>
</feature>
<feature type="binding site" evidence="4">
    <location>
        <position position="252"/>
    </location>
    <ligand>
        <name>Zn(2+)</name>
        <dbReference type="ChEBI" id="CHEBI:29105"/>
        <note>catalytic</note>
    </ligand>
</feature>
<feature type="binding site" evidence="4">
    <location>
        <position position="255"/>
    </location>
    <ligand>
        <name>Zn(2+)</name>
        <dbReference type="ChEBI" id="CHEBI:29105"/>
        <note>catalytic</note>
    </ligand>
</feature>
<feature type="binding site" evidence="4">
    <location>
        <position position="434"/>
    </location>
    <ligand>
        <name>Zn(2+)</name>
        <dbReference type="ChEBI" id="CHEBI:29105"/>
        <note>catalytic</note>
    </ligand>
</feature>
<feature type="modified residue" description="Phosphoserine" evidence="2">
    <location>
        <position position="839"/>
    </location>
</feature>
<keyword id="KW-0121">Carboxypeptidase</keyword>
<keyword id="KW-0963">Cytoplasm</keyword>
<keyword id="KW-0206">Cytoskeleton</keyword>
<keyword id="KW-0378">Hydrolase</keyword>
<keyword id="KW-0479">Metal-binding</keyword>
<keyword id="KW-0482">Metalloprotease</keyword>
<keyword id="KW-0539">Nucleus</keyword>
<keyword id="KW-0597">Phosphoprotein</keyword>
<keyword id="KW-0645">Protease</keyword>
<keyword id="KW-1185">Reference proteome</keyword>
<keyword id="KW-0862">Zinc</keyword>
<dbReference type="EC" id="3.4.17.-" evidence="2"/>
<dbReference type="EC" id="3.4.17.24" evidence="2"/>
<dbReference type="EMBL" id="GL192369">
    <property type="protein sequence ID" value="EFB20547.1"/>
    <property type="molecule type" value="Genomic_DNA"/>
</dbReference>
<dbReference type="RefSeq" id="XP_019663924.1">
    <property type="nucleotide sequence ID" value="XM_019808365.1"/>
</dbReference>
<dbReference type="RefSeq" id="XP_019663929.1">
    <property type="nucleotide sequence ID" value="XM_019808370.1"/>
</dbReference>
<dbReference type="SMR" id="D2GXM8"/>
<dbReference type="STRING" id="9646.ENSAMEP00000002036"/>
<dbReference type="MEROPS" id="M14.025"/>
<dbReference type="GeneID" id="100467720"/>
<dbReference type="KEGG" id="aml:100467720"/>
<dbReference type="CTD" id="60509"/>
<dbReference type="eggNOG" id="KOG3641">
    <property type="taxonomic scope" value="Eukaryota"/>
</dbReference>
<dbReference type="HOGENOM" id="CLU_007523_3_2_1"/>
<dbReference type="InParanoid" id="D2GXM8"/>
<dbReference type="OMA" id="LMHGCID"/>
<dbReference type="OrthoDB" id="10253041at2759"/>
<dbReference type="TreeFam" id="TF324301"/>
<dbReference type="Proteomes" id="UP000008912">
    <property type="component" value="Unassembled WGS sequence"/>
</dbReference>
<dbReference type="GO" id="GO:0005829">
    <property type="term" value="C:cytosol"/>
    <property type="evidence" value="ECO:0000250"/>
    <property type="project" value="UniProtKB"/>
</dbReference>
<dbReference type="GO" id="GO:0030496">
    <property type="term" value="C:midbody"/>
    <property type="evidence" value="ECO:0000250"/>
    <property type="project" value="UniProtKB"/>
</dbReference>
<dbReference type="GO" id="GO:0072686">
    <property type="term" value="C:mitotic spindle"/>
    <property type="evidence" value="ECO:0000250"/>
    <property type="project" value="UniProtKB"/>
</dbReference>
<dbReference type="GO" id="GO:0005634">
    <property type="term" value="C:nucleus"/>
    <property type="evidence" value="ECO:0000250"/>
    <property type="project" value="UniProtKB"/>
</dbReference>
<dbReference type="GO" id="GO:0004181">
    <property type="term" value="F:metallocarboxypeptidase activity"/>
    <property type="evidence" value="ECO:0000250"/>
    <property type="project" value="UniProtKB"/>
</dbReference>
<dbReference type="GO" id="GO:0015631">
    <property type="term" value="F:tubulin binding"/>
    <property type="evidence" value="ECO:0000250"/>
    <property type="project" value="UniProtKB"/>
</dbReference>
<dbReference type="GO" id="GO:0008270">
    <property type="term" value="F:zinc ion binding"/>
    <property type="evidence" value="ECO:0007669"/>
    <property type="project" value="InterPro"/>
</dbReference>
<dbReference type="GO" id="GO:0035609">
    <property type="term" value="P:C-terminal protein deglutamylation"/>
    <property type="evidence" value="ECO:0000250"/>
    <property type="project" value="UniProtKB"/>
</dbReference>
<dbReference type="GO" id="GO:0051607">
    <property type="term" value="P:defense response to virus"/>
    <property type="evidence" value="ECO:0000250"/>
    <property type="project" value="UniProtKB"/>
</dbReference>
<dbReference type="GO" id="GO:0035611">
    <property type="term" value="P:protein branching point deglutamylation"/>
    <property type="evidence" value="ECO:0000250"/>
    <property type="project" value="UniProtKB"/>
</dbReference>
<dbReference type="GO" id="GO:0035608">
    <property type="term" value="P:protein deglutamylation"/>
    <property type="evidence" value="ECO:0000250"/>
    <property type="project" value="UniProtKB"/>
</dbReference>
<dbReference type="GO" id="GO:0035610">
    <property type="term" value="P:protein side chain deglutamylation"/>
    <property type="evidence" value="ECO:0000250"/>
    <property type="project" value="UniProtKB"/>
</dbReference>
<dbReference type="GO" id="GO:0006508">
    <property type="term" value="P:proteolysis"/>
    <property type="evidence" value="ECO:0007669"/>
    <property type="project" value="UniProtKB-KW"/>
</dbReference>
<dbReference type="CDD" id="cd06236">
    <property type="entry name" value="M14_AGBL5_like"/>
    <property type="match status" value="1"/>
</dbReference>
<dbReference type="FunFam" id="3.40.630.10:FF:000055">
    <property type="entry name" value="Cytosolic carboxypeptidase-like protein 5 isoform X1"/>
    <property type="match status" value="1"/>
</dbReference>
<dbReference type="FunFam" id="3.40.630.10:FF:000049">
    <property type="entry name" value="cytosolic carboxypeptidase-like protein 5 isoform X1"/>
    <property type="match status" value="1"/>
</dbReference>
<dbReference type="FunFam" id="2.60.40.3120:FF:000002">
    <property type="entry name" value="cytosolic carboxypeptidase-like protein 5 isoform X2"/>
    <property type="match status" value="1"/>
</dbReference>
<dbReference type="Gene3D" id="2.60.40.3120">
    <property type="match status" value="1"/>
</dbReference>
<dbReference type="Gene3D" id="3.40.630.10">
    <property type="entry name" value="Zn peptidases"/>
    <property type="match status" value="2"/>
</dbReference>
<dbReference type="InterPro" id="IPR050821">
    <property type="entry name" value="Cytosolic_carboxypeptidase"/>
</dbReference>
<dbReference type="InterPro" id="IPR034286">
    <property type="entry name" value="M14_AGBL5-like"/>
</dbReference>
<dbReference type="InterPro" id="IPR040626">
    <property type="entry name" value="Pepdidase_M14_N"/>
</dbReference>
<dbReference type="InterPro" id="IPR000834">
    <property type="entry name" value="Peptidase_M14"/>
</dbReference>
<dbReference type="PANTHER" id="PTHR12756">
    <property type="entry name" value="CYTOSOLIC CARBOXYPEPTIDASE"/>
    <property type="match status" value="1"/>
</dbReference>
<dbReference type="PANTHER" id="PTHR12756:SF12">
    <property type="entry name" value="CYTOSOLIC CARBOXYPEPTIDASE-LIKE PROTEIN 5"/>
    <property type="match status" value="1"/>
</dbReference>
<dbReference type="Pfam" id="PF18027">
    <property type="entry name" value="Pepdidase_M14_N"/>
    <property type="match status" value="1"/>
</dbReference>
<dbReference type="Pfam" id="PF00246">
    <property type="entry name" value="Peptidase_M14"/>
    <property type="match status" value="1"/>
</dbReference>
<dbReference type="SUPFAM" id="SSF53187">
    <property type="entry name" value="Zn-dependent exopeptidases"/>
    <property type="match status" value="1"/>
</dbReference>
<dbReference type="PROSITE" id="PS52035">
    <property type="entry name" value="PEPTIDASE_M14"/>
    <property type="match status" value="1"/>
</dbReference>
<reference key="1">
    <citation type="journal article" date="2010" name="Nature">
        <title>The sequence and de novo assembly of the giant panda genome.</title>
        <authorList>
            <person name="Li R."/>
            <person name="Fan W."/>
            <person name="Tian G."/>
            <person name="Zhu H."/>
            <person name="He L."/>
            <person name="Cai J."/>
            <person name="Huang Q."/>
            <person name="Cai Q."/>
            <person name="Li B."/>
            <person name="Bai Y."/>
            <person name="Zhang Z."/>
            <person name="Zhang Y."/>
            <person name="Wang W."/>
            <person name="Li J."/>
            <person name="Wei F."/>
            <person name="Li H."/>
            <person name="Jian M."/>
            <person name="Li J."/>
            <person name="Zhang Z."/>
            <person name="Nielsen R."/>
            <person name="Li D."/>
            <person name="Gu W."/>
            <person name="Yang Z."/>
            <person name="Xuan Z."/>
            <person name="Ryder O.A."/>
            <person name="Leung F.C."/>
            <person name="Zhou Y."/>
            <person name="Cao J."/>
            <person name="Sun X."/>
            <person name="Fu Y."/>
            <person name="Fang X."/>
            <person name="Guo X."/>
            <person name="Wang B."/>
            <person name="Hou R."/>
            <person name="Shen F."/>
            <person name="Mu B."/>
            <person name="Ni P."/>
            <person name="Lin R."/>
            <person name="Qian W."/>
            <person name="Wang G."/>
            <person name="Yu C."/>
            <person name="Nie W."/>
            <person name="Wang J."/>
            <person name="Wu Z."/>
            <person name="Liang H."/>
            <person name="Min J."/>
            <person name="Wu Q."/>
            <person name="Cheng S."/>
            <person name="Ruan J."/>
            <person name="Wang M."/>
            <person name="Shi Z."/>
            <person name="Wen M."/>
            <person name="Liu B."/>
            <person name="Ren X."/>
            <person name="Zheng H."/>
            <person name="Dong D."/>
            <person name="Cook K."/>
            <person name="Shan G."/>
            <person name="Zhang H."/>
            <person name="Kosiol C."/>
            <person name="Xie X."/>
            <person name="Lu Z."/>
            <person name="Zheng H."/>
            <person name="Li Y."/>
            <person name="Steiner C.C."/>
            <person name="Lam T.T."/>
            <person name="Lin S."/>
            <person name="Zhang Q."/>
            <person name="Li G."/>
            <person name="Tian J."/>
            <person name="Gong T."/>
            <person name="Liu H."/>
            <person name="Zhang D."/>
            <person name="Fang L."/>
            <person name="Ye C."/>
            <person name="Zhang J."/>
            <person name="Hu W."/>
            <person name="Xu A."/>
            <person name="Ren Y."/>
            <person name="Zhang G."/>
            <person name="Bruford M.W."/>
            <person name="Li Q."/>
            <person name="Ma L."/>
            <person name="Guo Y."/>
            <person name="An N."/>
            <person name="Hu Y."/>
            <person name="Zheng Y."/>
            <person name="Shi Y."/>
            <person name="Li Z."/>
            <person name="Liu Q."/>
            <person name="Chen Y."/>
            <person name="Zhao J."/>
            <person name="Qu N."/>
            <person name="Zhao S."/>
            <person name="Tian F."/>
            <person name="Wang X."/>
            <person name="Wang H."/>
            <person name="Xu L."/>
            <person name="Liu X."/>
            <person name="Vinar T."/>
            <person name="Wang Y."/>
            <person name="Lam T.W."/>
            <person name="Yiu S.M."/>
            <person name="Liu S."/>
            <person name="Zhang H."/>
            <person name="Li D."/>
            <person name="Huang Y."/>
            <person name="Wang X."/>
            <person name="Yang G."/>
            <person name="Jiang Z."/>
            <person name="Wang J."/>
            <person name="Qin N."/>
            <person name="Li L."/>
            <person name="Li J."/>
            <person name="Bolund L."/>
            <person name="Kristiansen K."/>
            <person name="Wong G.K."/>
            <person name="Olson M."/>
            <person name="Zhang X."/>
            <person name="Li S."/>
            <person name="Yang H."/>
            <person name="Wang J."/>
            <person name="Wang J."/>
        </authorList>
    </citation>
    <scope>NUCLEOTIDE SEQUENCE [LARGE SCALE GENOMIC DNA]</scope>
</reference>
<comment type="function">
    <text evidence="2">Metallocarboxypeptidase that mediates deglutamylation of tubulin and non-tubulin target proteins. Catalyzes the removal of polyglutamate side chains present on the gamma-carboxyl group of glutamate residues within the C-terminal tail of alpha- and beta-tubulin. Cleaves alpha- and gamma-linked polyglutamate tubulin side-chain, as well as the branching point glutamate. Also catalyzes the removal of alpha-linked glutamate residues from the carboxy-terminus of alpha-tubulin. Mediates deglutamylation of nucleotidyltransferase CGAS, leading to CGAS antiviral defense response activation.</text>
</comment>
<comment type="catalytic activity">
    <reaction evidence="2">
        <text>gamma-L-glutamyl-L-glutamyl-[protein] + H2O = L-glutamyl-[protein] + L-glutamate</text>
        <dbReference type="Rhea" id="RHEA:60152"/>
        <dbReference type="Rhea" id="RHEA-COMP:10208"/>
        <dbReference type="Rhea" id="RHEA-COMP:15517"/>
        <dbReference type="ChEBI" id="CHEBI:15377"/>
        <dbReference type="ChEBI" id="CHEBI:29973"/>
        <dbReference type="ChEBI" id="CHEBI:29985"/>
        <dbReference type="ChEBI" id="CHEBI:143622"/>
    </reaction>
    <physiologicalReaction direction="left-to-right" evidence="2">
        <dbReference type="Rhea" id="RHEA:60153"/>
    </physiologicalReaction>
</comment>
<comment type="catalytic activity">
    <reaction evidence="2">
        <text>(L-glutamyl)(n+1)-gamma-L-glutamyl-L-glutamyl-[protein] + H2O = (L-glutamyl)(n)-gamma-L-glutamyl-L-glutamyl-[protein] + L-glutamate</text>
        <dbReference type="Rhea" id="RHEA:60004"/>
        <dbReference type="Rhea" id="RHEA-COMP:15519"/>
        <dbReference type="Rhea" id="RHEA-COMP:15675"/>
        <dbReference type="ChEBI" id="CHEBI:15377"/>
        <dbReference type="ChEBI" id="CHEBI:29985"/>
        <dbReference type="ChEBI" id="CHEBI:143623"/>
    </reaction>
    <physiologicalReaction direction="left-to-right" evidence="2">
        <dbReference type="Rhea" id="RHEA:60005"/>
    </physiologicalReaction>
</comment>
<comment type="catalytic activity">
    <reaction evidence="2">
        <text>C-terminal L-alpha-aminoacyl-L-glutamyl-[tubulin] + H2O = C-terminal L-alpha-aminoacyl-[tubulin] + L-glutamate</text>
        <dbReference type="Rhea" id="RHEA:63796"/>
        <dbReference type="Rhea" id="RHEA-COMP:16436"/>
        <dbReference type="Rhea" id="RHEA-COMP:16437"/>
        <dbReference type="ChEBI" id="CHEBI:15377"/>
        <dbReference type="ChEBI" id="CHEBI:29985"/>
        <dbReference type="ChEBI" id="CHEBI:90782"/>
        <dbReference type="ChEBI" id="CHEBI:149556"/>
        <dbReference type="EC" id="3.4.17.24"/>
    </reaction>
    <physiologicalReaction direction="left-to-right" evidence="2">
        <dbReference type="Rhea" id="RHEA:63797"/>
    </physiologicalReaction>
</comment>
<comment type="catalytic activity">
    <reaction evidence="2">
        <text>C-terminal L-alpha-aminoacyl-L-glutamyl-L-glutamyl-[tubulin] + H2O = C-terminal L-alpha-aminoacyl-L-glutamyl-[tubulin] + L-glutamate</text>
        <dbReference type="Rhea" id="RHEA:63792"/>
        <dbReference type="Rhea" id="RHEA-COMP:16435"/>
        <dbReference type="Rhea" id="RHEA-COMP:16436"/>
        <dbReference type="ChEBI" id="CHEBI:15377"/>
        <dbReference type="ChEBI" id="CHEBI:29985"/>
        <dbReference type="ChEBI" id="CHEBI:149555"/>
        <dbReference type="ChEBI" id="CHEBI:149556"/>
        <dbReference type="EC" id="3.4.17.24"/>
    </reaction>
    <physiologicalReaction direction="left-to-right" evidence="2">
        <dbReference type="Rhea" id="RHEA:63793"/>
    </physiologicalReaction>
</comment>
<comment type="cofactor">
    <cofactor evidence="1">
        <name>Zn(2+)</name>
        <dbReference type="ChEBI" id="CHEBI:29105"/>
    </cofactor>
    <text evidence="1">Binds 1 zinc ion per subunit.</text>
</comment>
<comment type="subcellular location">
    <subcellularLocation>
        <location evidence="2">Cytoplasm</location>
        <location evidence="2">Cytosol</location>
    </subcellularLocation>
    <subcellularLocation>
        <location evidence="2">Nucleus</location>
    </subcellularLocation>
    <subcellularLocation>
        <location evidence="3">Cytoplasm</location>
        <location evidence="3">Cytoskeleton</location>
        <location evidence="3">Spindle</location>
    </subcellularLocation>
    <subcellularLocation>
        <location evidence="3">Midbody</location>
    </subcellularLocation>
    <text evidence="2 3">Mainly cytoplasmic. Slight accumulation in the nucleus is observed. Colocalizes with alpha-tubulin in the mitotic spindle and with midbody microtubules in the intercellular bridges formed during cytokinesis.</text>
</comment>
<comment type="similarity">
    <text evidence="6">Belongs to the peptidase M14 family.</text>
</comment>
<gene>
    <name type="primary">AGBL5</name>
    <name evidence="2" type="synonym">CCP5</name>
    <name type="ORF">PANDA_001668</name>
</gene>
<accession>D2GXM8</accession>
<evidence type="ECO:0000250" key="1">
    <source>
        <dbReference type="UniProtKB" id="P00730"/>
    </source>
</evidence>
<evidence type="ECO:0000250" key="2">
    <source>
        <dbReference type="UniProtKB" id="Q09M02"/>
    </source>
</evidence>
<evidence type="ECO:0000250" key="3">
    <source>
        <dbReference type="UniProtKB" id="Q8NDL9"/>
    </source>
</evidence>
<evidence type="ECO:0000255" key="4">
    <source>
        <dbReference type="PROSITE-ProRule" id="PRU01379"/>
    </source>
</evidence>
<evidence type="ECO:0000256" key="5">
    <source>
        <dbReference type="SAM" id="MobiDB-lite"/>
    </source>
</evidence>
<evidence type="ECO:0000305" key="6"/>
<name>CBPC5_AILME</name>
<sequence length="884" mass="96914">MELRCGGLLFSSRFDSGNLAHVEKVDSVSGDGEGGAAGASAPFSSIASSPDYEFNVWTRPDCAETEFENGNRSWFYFSVRGGTPGKLIKINIMNMNKQSKLYSQGMAPFVRTLPTRPRWERIRDRPTFEMTETQFVLSFVHRFVEGRGATTFFAFCYPFSYSDCQDLLNQLDQRFLENHPTHSSPLDTIYYHREILCYSLDGLRVDLLTITSCHGLREDREPRLQQLFPDTGTPRPFCFTGKRIFFLSSRVHPGETPSSFVFNGFLDFILRPDDPRAQTLRRLFVFKLIPMLNPDGVVRGHYRTDSRGVNLNRQYLKPDAALHPAIYGAKAVLLYHHVHSRLHPQSPSEHQHSPCLPPDAPLSDLEKANHLRNEAHLGHTSDGDSPEDWTQTRPAEQKASGVWLMPQQCADAEQPAPDTIPPKESGVAYYVDLHGHASKRGCFMYGNSFSDESTQVENMLYPKLISLNSAHFDFQGCNFSEKNMYARDRRDGQSKEGSGRVAIYKASGIIHSYTLECNYNTGRSVNSIPAACHDNGRASPPPPPAFPSRYTVELFEQVGRAMAIAALDMAECNPWPRIVLSEHSSLTNLRAWMLKHVRSSRGLSSTVSGAVNKKRGSRTPPRSNSGLPVSCSENPLSRARSFSTGTSAGGSSSSQQNSPQMKNSPSFPFHGSRPTGLPGLGSSTQKVSHRVLGPVREPRSQDRRRRQQPLTHRPTSSSLAPSPNPTSSSPASSHSTGPCLLPSAFSVSGSSCSLLSSGDKPEAVMVIGKGLLGPRIPCIRTRLQVRPRLGQGSPPTCRGMSGSSGPTSPIPRTRESSEPEPGPHSAPGLPQAGPPRPRSAPAFSPISCSLSDSQSRICYSGGPLGQPEVCFGPKSPPLTVSPRV</sequence>
<proteinExistence type="inferred from homology"/>